<keyword id="KW-0010">Activator</keyword>
<keyword id="KW-0963">Cytoplasm</keyword>
<keyword id="KW-0238">DNA-binding</keyword>
<keyword id="KW-0346">Stress response</keyword>
<keyword id="KW-0804">Transcription</keyword>
<keyword id="KW-0805">Transcription regulation</keyword>
<evidence type="ECO:0000250" key="1"/>
<feature type="chain" id="PRO_0000100304" description="Major cold shock protein">
    <location>
        <begin position="1" status="less than"/>
        <end position="46" status="greater than"/>
    </location>
</feature>
<feature type="domain" description="CSD">
    <location>
        <begin position="1" status="less than"/>
        <end position="46" status="greater than"/>
    </location>
</feature>
<feature type="non-terminal residue">
    <location>
        <position position="1"/>
    </location>
</feature>
<feature type="non-terminal residue">
    <location>
        <position position="46"/>
    </location>
</feature>
<protein>
    <recommendedName>
        <fullName>Major cold shock protein</fullName>
    </recommendedName>
</protein>
<dbReference type="EMBL" id="U60039">
    <property type="protein sequence ID" value="AAC80243.1"/>
    <property type="molecule type" value="Genomic_DNA"/>
</dbReference>
<dbReference type="SMR" id="Q48493"/>
<dbReference type="GO" id="GO:0005829">
    <property type="term" value="C:cytosol"/>
    <property type="evidence" value="ECO:0007669"/>
    <property type="project" value="UniProtKB-ARBA"/>
</dbReference>
<dbReference type="GO" id="GO:0003677">
    <property type="term" value="F:DNA binding"/>
    <property type="evidence" value="ECO:0007669"/>
    <property type="project" value="UniProtKB-KW"/>
</dbReference>
<dbReference type="CDD" id="cd04458">
    <property type="entry name" value="CSP_CDS"/>
    <property type="match status" value="1"/>
</dbReference>
<dbReference type="Gene3D" id="2.40.50.140">
    <property type="entry name" value="Nucleic acid-binding proteins"/>
    <property type="match status" value="1"/>
</dbReference>
<dbReference type="InterPro" id="IPR012156">
    <property type="entry name" value="Cold_shock_CspA"/>
</dbReference>
<dbReference type="InterPro" id="IPR011129">
    <property type="entry name" value="CSD"/>
</dbReference>
<dbReference type="InterPro" id="IPR019844">
    <property type="entry name" value="CSD_CS"/>
</dbReference>
<dbReference type="InterPro" id="IPR002059">
    <property type="entry name" value="CSP_DNA-bd"/>
</dbReference>
<dbReference type="InterPro" id="IPR012340">
    <property type="entry name" value="NA-bd_OB-fold"/>
</dbReference>
<dbReference type="PANTHER" id="PTHR46565">
    <property type="entry name" value="COLD SHOCK DOMAIN PROTEIN 2"/>
    <property type="match status" value="1"/>
</dbReference>
<dbReference type="PANTHER" id="PTHR46565:SF20">
    <property type="entry name" value="COLD SHOCK DOMAIN-CONTAINING PROTEIN 4"/>
    <property type="match status" value="1"/>
</dbReference>
<dbReference type="Pfam" id="PF00313">
    <property type="entry name" value="CSD"/>
    <property type="match status" value="1"/>
</dbReference>
<dbReference type="PIRSF" id="PIRSF002599">
    <property type="entry name" value="Cold_shock_A"/>
    <property type="match status" value="1"/>
</dbReference>
<dbReference type="PRINTS" id="PR00050">
    <property type="entry name" value="COLDSHOCK"/>
</dbReference>
<dbReference type="SMART" id="SM00357">
    <property type="entry name" value="CSP"/>
    <property type="match status" value="1"/>
</dbReference>
<dbReference type="SUPFAM" id="SSF50249">
    <property type="entry name" value="Nucleic acid-binding proteins"/>
    <property type="match status" value="1"/>
</dbReference>
<dbReference type="PROSITE" id="PS00352">
    <property type="entry name" value="CSD_1"/>
    <property type="match status" value="1"/>
</dbReference>
<dbReference type="PROSITE" id="PS51857">
    <property type="entry name" value="CSD_2"/>
    <property type="match status" value="1"/>
</dbReference>
<name>CSPA_KLEPN</name>
<sequence>SKGFGFISPKDGSKDVFVHFSAIQSDSFKTLNEGQEVSFTIENGAK</sequence>
<gene>
    <name type="primary">cspA</name>
</gene>
<comment type="subunit">
    <text evidence="1">Homodimer.</text>
</comment>
<comment type="subcellular location">
    <subcellularLocation>
        <location evidence="1">Cytoplasm</location>
    </subcellularLocation>
</comment>
<comment type="induction">
    <text evidence="1">In response to low temperature.</text>
</comment>
<accession>Q48493</accession>
<reference key="1">
    <citation type="journal article" date="1997" name="J. Ind. Microbiol. Biotechnol.">
        <title>Detection and speciation of bacteria through PCR using universal major cold-shock protein primer oligomers.</title>
        <authorList>
            <person name="Francis K.P."/>
            <person name="Stewart G.S.A.B."/>
        </authorList>
    </citation>
    <scope>NUCLEOTIDE SEQUENCE [GENOMIC DNA]</scope>
    <source>
        <strain>ATCC 13883 / DSM 30104 / JCM 1662 / NBRC 14940 / NCIMB 13281 / NCTC 9633</strain>
    </source>
</reference>
<organism>
    <name type="scientific">Klebsiella pneumoniae</name>
    <dbReference type="NCBI Taxonomy" id="573"/>
    <lineage>
        <taxon>Bacteria</taxon>
        <taxon>Pseudomonadati</taxon>
        <taxon>Pseudomonadota</taxon>
        <taxon>Gammaproteobacteria</taxon>
        <taxon>Enterobacterales</taxon>
        <taxon>Enterobacteriaceae</taxon>
        <taxon>Klebsiella/Raoultella group</taxon>
        <taxon>Klebsiella</taxon>
        <taxon>Klebsiella pneumoniae complex</taxon>
    </lineage>
</organism>
<proteinExistence type="inferred from homology"/>